<proteinExistence type="inferred from homology"/>
<sequence>MSEQTVYGAASDQPTPKPRVKVRTTHLQKWKAEGHKWAMLTAYDFSTARAFDDAGIPVLLVGDSAANVVYGYDTTVPITIDELIPLVRGVVRGAPHALVVADLPFGSYEEGPRQALATATRFLKETGAHAVKLEGGERVAEQIATLSAAGIPVMAHIGFTPQSVNGLGGFKVQGRGDAAEQTIHDAIAVQEAGAFSVVMEMVPAELATQITGKLTIPTVGIGAGPNCDAQVLVWQDMAGLTSGRTAKFVKRFGDVGAELRRAASQYADEVAAGVFPAEEHSF</sequence>
<organism>
    <name type="scientific">Mycobacterium sp. (strain JLS)</name>
    <dbReference type="NCBI Taxonomy" id="164757"/>
    <lineage>
        <taxon>Bacteria</taxon>
        <taxon>Bacillati</taxon>
        <taxon>Actinomycetota</taxon>
        <taxon>Actinomycetes</taxon>
        <taxon>Mycobacteriales</taxon>
        <taxon>Mycobacteriaceae</taxon>
        <taxon>Mycobacterium</taxon>
    </lineage>
</organism>
<protein>
    <recommendedName>
        <fullName evidence="1">3-methyl-2-oxobutanoate hydroxymethyltransferase</fullName>
        <ecNumber evidence="1">2.1.2.11</ecNumber>
    </recommendedName>
    <alternativeName>
        <fullName evidence="1">Ketopantoate hydroxymethyltransferase</fullName>
        <shortName evidence="1">KPHMT</shortName>
    </alternativeName>
</protein>
<name>PANB_MYCSJ</name>
<feature type="chain" id="PRO_0000297300" description="3-methyl-2-oxobutanoate hydroxymethyltransferase">
    <location>
        <begin position="1"/>
        <end position="282"/>
    </location>
</feature>
<feature type="active site" description="Proton acceptor" evidence="1">
    <location>
        <position position="200"/>
    </location>
</feature>
<feature type="binding site" evidence="1">
    <location>
        <begin position="63"/>
        <end position="64"/>
    </location>
    <ligand>
        <name>3-methyl-2-oxobutanoate</name>
        <dbReference type="ChEBI" id="CHEBI:11851"/>
    </ligand>
</feature>
<feature type="binding site" evidence="1">
    <location>
        <position position="63"/>
    </location>
    <ligand>
        <name>Mg(2+)</name>
        <dbReference type="ChEBI" id="CHEBI:18420"/>
    </ligand>
</feature>
<feature type="binding site" evidence="1">
    <location>
        <position position="102"/>
    </location>
    <ligand>
        <name>3-methyl-2-oxobutanoate</name>
        <dbReference type="ChEBI" id="CHEBI:11851"/>
    </ligand>
</feature>
<feature type="binding site" evidence="1">
    <location>
        <position position="102"/>
    </location>
    <ligand>
        <name>Mg(2+)</name>
        <dbReference type="ChEBI" id="CHEBI:18420"/>
    </ligand>
</feature>
<feature type="binding site" evidence="1">
    <location>
        <position position="132"/>
    </location>
    <ligand>
        <name>3-methyl-2-oxobutanoate</name>
        <dbReference type="ChEBI" id="CHEBI:11851"/>
    </ligand>
</feature>
<feature type="binding site" evidence="1">
    <location>
        <position position="134"/>
    </location>
    <ligand>
        <name>Mg(2+)</name>
        <dbReference type="ChEBI" id="CHEBI:18420"/>
    </ligand>
</feature>
<accession>A3Q1U4</accession>
<gene>
    <name evidence="1" type="primary">panB</name>
    <name type="ordered locus">Mjls_3343</name>
</gene>
<reference key="1">
    <citation type="submission" date="2007-02" db="EMBL/GenBank/DDBJ databases">
        <title>Complete sequence of Mycobacterium sp. JLS.</title>
        <authorList>
            <consortium name="US DOE Joint Genome Institute"/>
            <person name="Copeland A."/>
            <person name="Lucas S."/>
            <person name="Lapidus A."/>
            <person name="Barry K."/>
            <person name="Detter J.C."/>
            <person name="Glavina del Rio T."/>
            <person name="Hammon N."/>
            <person name="Israni S."/>
            <person name="Dalin E."/>
            <person name="Tice H."/>
            <person name="Pitluck S."/>
            <person name="Chain P."/>
            <person name="Malfatti S."/>
            <person name="Shin M."/>
            <person name="Vergez L."/>
            <person name="Schmutz J."/>
            <person name="Larimer F."/>
            <person name="Land M."/>
            <person name="Hauser L."/>
            <person name="Kyrpides N."/>
            <person name="Mikhailova N."/>
            <person name="Miller C.D."/>
            <person name="Anderson A.J."/>
            <person name="Sims R.C."/>
            <person name="Richardson P."/>
        </authorList>
    </citation>
    <scope>NUCLEOTIDE SEQUENCE [LARGE SCALE GENOMIC DNA]</scope>
    <source>
        <strain>JLS</strain>
    </source>
</reference>
<dbReference type="EC" id="2.1.2.11" evidence="1"/>
<dbReference type="EMBL" id="CP000580">
    <property type="protein sequence ID" value="ABN99121.1"/>
    <property type="molecule type" value="Genomic_DNA"/>
</dbReference>
<dbReference type="SMR" id="A3Q1U4"/>
<dbReference type="KEGG" id="mjl:Mjls_3343"/>
<dbReference type="HOGENOM" id="CLU_036645_1_0_11"/>
<dbReference type="BioCyc" id="MSP164757:G1G8C-3369-MONOMER"/>
<dbReference type="UniPathway" id="UPA00028">
    <property type="reaction ID" value="UER00003"/>
</dbReference>
<dbReference type="GO" id="GO:0005737">
    <property type="term" value="C:cytoplasm"/>
    <property type="evidence" value="ECO:0007669"/>
    <property type="project" value="UniProtKB-SubCell"/>
</dbReference>
<dbReference type="GO" id="GO:0003864">
    <property type="term" value="F:3-methyl-2-oxobutanoate hydroxymethyltransferase activity"/>
    <property type="evidence" value="ECO:0007669"/>
    <property type="project" value="UniProtKB-UniRule"/>
</dbReference>
<dbReference type="GO" id="GO:0000287">
    <property type="term" value="F:magnesium ion binding"/>
    <property type="evidence" value="ECO:0007669"/>
    <property type="project" value="TreeGrafter"/>
</dbReference>
<dbReference type="GO" id="GO:0015940">
    <property type="term" value="P:pantothenate biosynthetic process"/>
    <property type="evidence" value="ECO:0007669"/>
    <property type="project" value="UniProtKB-UniRule"/>
</dbReference>
<dbReference type="CDD" id="cd06557">
    <property type="entry name" value="KPHMT-like"/>
    <property type="match status" value="1"/>
</dbReference>
<dbReference type="FunFam" id="3.20.20.60:FF:000003">
    <property type="entry name" value="3-methyl-2-oxobutanoate hydroxymethyltransferase"/>
    <property type="match status" value="1"/>
</dbReference>
<dbReference type="Gene3D" id="3.20.20.60">
    <property type="entry name" value="Phosphoenolpyruvate-binding domains"/>
    <property type="match status" value="1"/>
</dbReference>
<dbReference type="HAMAP" id="MF_00156">
    <property type="entry name" value="PanB"/>
    <property type="match status" value="1"/>
</dbReference>
<dbReference type="InterPro" id="IPR003700">
    <property type="entry name" value="Pantoate_hydroxy_MeTrfase"/>
</dbReference>
<dbReference type="InterPro" id="IPR015813">
    <property type="entry name" value="Pyrv/PenolPyrv_kinase-like_dom"/>
</dbReference>
<dbReference type="InterPro" id="IPR040442">
    <property type="entry name" value="Pyrv_kinase-like_dom_sf"/>
</dbReference>
<dbReference type="NCBIfam" id="TIGR00222">
    <property type="entry name" value="panB"/>
    <property type="match status" value="1"/>
</dbReference>
<dbReference type="NCBIfam" id="NF001452">
    <property type="entry name" value="PRK00311.1"/>
    <property type="match status" value="1"/>
</dbReference>
<dbReference type="PANTHER" id="PTHR20881">
    <property type="entry name" value="3-METHYL-2-OXOBUTANOATE HYDROXYMETHYLTRANSFERASE"/>
    <property type="match status" value="1"/>
</dbReference>
<dbReference type="PANTHER" id="PTHR20881:SF0">
    <property type="entry name" value="3-METHYL-2-OXOBUTANOATE HYDROXYMETHYLTRANSFERASE"/>
    <property type="match status" value="1"/>
</dbReference>
<dbReference type="Pfam" id="PF02548">
    <property type="entry name" value="Pantoate_transf"/>
    <property type="match status" value="1"/>
</dbReference>
<dbReference type="PIRSF" id="PIRSF000388">
    <property type="entry name" value="Pantoate_hydroxy_MeTrfase"/>
    <property type="match status" value="1"/>
</dbReference>
<dbReference type="SUPFAM" id="SSF51621">
    <property type="entry name" value="Phosphoenolpyruvate/pyruvate domain"/>
    <property type="match status" value="1"/>
</dbReference>
<evidence type="ECO:0000255" key="1">
    <source>
        <dbReference type="HAMAP-Rule" id="MF_00156"/>
    </source>
</evidence>
<keyword id="KW-0963">Cytoplasm</keyword>
<keyword id="KW-0460">Magnesium</keyword>
<keyword id="KW-0479">Metal-binding</keyword>
<keyword id="KW-0566">Pantothenate biosynthesis</keyword>
<keyword id="KW-0808">Transferase</keyword>
<comment type="function">
    <text evidence="1">Catalyzes the reversible reaction in which hydroxymethyl group from 5,10-methylenetetrahydrofolate is transferred onto alpha-ketoisovalerate to form ketopantoate.</text>
</comment>
<comment type="catalytic activity">
    <reaction evidence="1">
        <text>3-methyl-2-oxobutanoate + (6R)-5,10-methylene-5,6,7,8-tetrahydrofolate + H2O = 2-dehydropantoate + (6S)-5,6,7,8-tetrahydrofolate</text>
        <dbReference type="Rhea" id="RHEA:11824"/>
        <dbReference type="ChEBI" id="CHEBI:11561"/>
        <dbReference type="ChEBI" id="CHEBI:11851"/>
        <dbReference type="ChEBI" id="CHEBI:15377"/>
        <dbReference type="ChEBI" id="CHEBI:15636"/>
        <dbReference type="ChEBI" id="CHEBI:57453"/>
        <dbReference type="EC" id="2.1.2.11"/>
    </reaction>
</comment>
<comment type="cofactor">
    <cofactor evidence="1">
        <name>Mg(2+)</name>
        <dbReference type="ChEBI" id="CHEBI:18420"/>
    </cofactor>
    <text evidence="1">Binds 1 Mg(2+) ion per subunit.</text>
</comment>
<comment type="pathway">
    <text evidence="1">Cofactor biosynthesis; (R)-pantothenate biosynthesis; (R)-pantoate from 3-methyl-2-oxobutanoate: step 1/2.</text>
</comment>
<comment type="subunit">
    <text evidence="1">Homodecamer; pentamer of dimers.</text>
</comment>
<comment type="subcellular location">
    <subcellularLocation>
        <location evidence="1">Cytoplasm</location>
    </subcellularLocation>
</comment>
<comment type="similarity">
    <text evidence="1">Belongs to the PanB family.</text>
</comment>